<sequence>MTITPQQLIAMLPLLIVGLTVVVVMLSIAWRRDHFINATLTVIGLNLALLSLYFVGQVGPMDVTPLMRVDGYSMFYTGLVIIASLATSTFAYPWLVGYPDNREEFYLLVLIAALGGILLTSANHLASLFLGIELLTLPLFGLIGYAYRQKRSLEASIKYMLLSAAASSFLLFGMALLYAESGSLSFVGLGQSLSDSMVHQPLILAGLGMMIVGLGFKLSLVPFQLWTPDVYQGAPAPVSTFLATASKIAIFAVVMRLFMYAPAADSEAVRLVLSIIAVASILFGNLMAISQTNIKRLLGYSSIAHLGYLLIALVAVQTHELALPLETIGVYLAGYLFSSLGAFGVVSLMSSPYKGPDAESLFSYRGLFWHKPILSAVMTVMMLSLAGIPMTLGFIGKFFVVAMGVSANLWWLTGAVVLGSAIGLYYYLRVTVSLFLSPPQSLVRDTPSNWALTAGGVVVLISAILVLVLGIYPQPLITLVQMAQPLM</sequence>
<keyword id="KW-0997">Cell inner membrane</keyword>
<keyword id="KW-1003">Cell membrane</keyword>
<keyword id="KW-0472">Membrane</keyword>
<keyword id="KW-0520">NAD</keyword>
<keyword id="KW-0874">Quinone</keyword>
<keyword id="KW-1278">Translocase</keyword>
<keyword id="KW-0812">Transmembrane</keyword>
<keyword id="KW-1133">Transmembrane helix</keyword>
<keyword id="KW-0813">Transport</keyword>
<keyword id="KW-0830">Ubiquinone</keyword>
<dbReference type="EC" id="7.1.1.-" evidence="1"/>
<dbReference type="EMBL" id="CP000901">
    <property type="protein sequence ID" value="ABX88672.1"/>
    <property type="molecule type" value="Genomic_DNA"/>
</dbReference>
<dbReference type="RefSeq" id="WP_012229499.1">
    <property type="nucleotide sequence ID" value="NC_010159.1"/>
</dbReference>
<dbReference type="SMR" id="A9R6K9"/>
<dbReference type="KEGG" id="ypg:YpAngola_A1804"/>
<dbReference type="PATRIC" id="fig|349746.12.peg.2780"/>
<dbReference type="GO" id="GO:0005886">
    <property type="term" value="C:plasma membrane"/>
    <property type="evidence" value="ECO:0007669"/>
    <property type="project" value="UniProtKB-SubCell"/>
</dbReference>
<dbReference type="GO" id="GO:0008137">
    <property type="term" value="F:NADH dehydrogenase (ubiquinone) activity"/>
    <property type="evidence" value="ECO:0007669"/>
    <property type="project" value="InterPro"/>
</dbReference>
<dbReference type="GO" id="GO:0050136">
    <property type="term" value="F:NADH:ubiquinone reductase (non-electrogenic) activity"/>
    <property type="evidence" value="ECO:0007669"/>
    <property type="project" value="UniProtKB-UniRule"/>
</dbReference>
<dbReference type="GO" id="GO:0048038">
    <property type="term" value="F:quinone binding"/>
    <property type="evidence" value="ECO:0007669"/>
    <property type="project" value="UniProtKB-KW"/>
</dbReference>
<dbReference type="GO" id="GO:0042773">
    <property type="term" value="P:ATP synthesis coupled electron transport"/>
    <property type="evidence" value="ECO:0007669"/>
    <property type="project" value="InterPro"/>
</dbReference>
<dbReference type="HAMAP" id="MF_00445">
    <property type="entry name" value="NDH1_NuoN_1"/>
    <property type="match status" value="1"/>
</dbReference>
<dbReference type="InterPro" id="IPR010096">
    <property type="entry name" value="NADH-Q_OxRdtase_suN/2"/>
</dbReference>
<dbReference type="InterPro" id="IPR001750">
    <property type="entry name" value="ND/Mrp_TM"/>
</dbReference>
<dbReference type="NCBIfam" id="TIGR01770">
    <property type="entry name" value="NDH_I_N"/>
    <property type="match status" value="1"/>
</dbReference>
<dbReference type="NCBIfam" id="NF004439">
    <property type="entry name" value="PRK05777.1-1"/>
    <property type="match status" value="1"/>
</dbReference>
<dbReference type="PANTHER" id="PTHR22773">
    <property type="entry name" value="NADH DEHYDROGENASE"/>
    <property type="match status" value="1"/>
</dbReference>
<dbReference type="Pfam" id="PF00361">
    <property type="entry name" value="Proton_antipo_M"/>
    <property type="match status" value="1"/>
</dbReference>
<organism>
    <name type="scientific">Yersinia pestis bv. Antiqua (strain Angola)</name>
    <dbReference type="NCBI Taxonomy" id="349746"/>
    <lineage>
        <taxon>Bacteria</taxon>
        <taxon>Pseudomonadati</taxon>
        <taxon>Pseudomonadota</taxon>
        <taxon>Gammaproteobacteria</taxon>
        <taxon>Enterobacterales</taxon>
        <taxon>Yersiniaceae</taxon>
        <taxon>Yersinia</taxon>
    </lineage>
</organism>
<feature type="chain" id="PRO_1000145882" description="NADH-quinone oxidoreductase subunit N">
    <location>
        <begin position="1"/>
        <end position="487"/>
    </location>
</feature>
<feature type="transmembrane region" description="Helical" evidence="1">
    <location>
        <begin position="8"/>
        <end position="28"/>
    </location>
</feature>
<feature type="transmembrane region" description="Helical" evidence="1">
    <location>
        <begin position="35"/>
        <end position="55"/>
    </location>
</feature>
<feature type="transmembrane region" description="Helical" evidence="1">
    <location>
        <begin position="78"/>
        <end position="98"/>
    </location>
</feature>
<feature type="transmembrane region" description="Helical" evidence="1">
    <location>
        <begin position="104"/>
        <end position="124"/>
    </location>
</feature>
<feature type="transmembrane region" description="Helical" evidence="1">
    <location>
        <begin position="125"/>
        <end position="145"/>
    </location>
</feature>
<feature type="transmembrane region" description="Helical" evidence="1">
    <location>
        <begin position="159"/>
        <end position="179"/>
    </location>
</feature>
<feature type="transmembrane region" description="Helical" evidence="1">
    <location>
        <begin position="203"/>
        <end position="223"/>
    </location>
</feature>
<feature type="transmembrane region" description="Helical" evidence="1">
    <location>
        <begin position="235"/>
        <end position="255"/>
    </location>
</feature>
<feature type="transmembrane region" description="Helical" evidence="1">
    <location>
        <begin position="271"/>
        <end position="291"/>
    </location>
</feature>
<feature type="transmembrane region" description="Helical" evidence="1">
    <location>
        <begin position="297"/>
        <end position="317"/>
    </location>
</feature>
<feature type="transmembrane region" description="Helical" evidence="1">
    <location>
        <begin position="328"/>
        <end position="348"/>
    </location>
</feature>
<feature type="transmembrane region" description="Helical" evidence="1">
    <location>
        <begin position="376"/>
        <end position="396"/>
    </location>
</feature>
<feature type="transmembrane region" description="Helical" evidence="1">
    <location>
        <begin position="409"/>
        <end position="428"/>
    </location>
</feature>
<feature type="transmembrane region" description="Helical" evidence="1">
    <location>
        <begin position="451"/>
        <end position="471"/>
    </location>
</feature>
<name>NUON_YERPG</name>
<protein>
    <recommendedName>
        <fullName evidence="1">NADH-quinone oxidoreductase subunit N</fullName>
        <ecNumber evidence="1">7.1.1.-</ecNumber>
    </recommendedName>
    <alternativeName>
        <fullName evidence="1">NADH dehydrogenase I subunit N</fullName>
    </alternativeName>
    <alternativeName>
        <fullName evidence="1">NDH-1 subunit N</fullName>
    </alternativeName>
</protein>
<accession>A9R6K9</accession>
<gene>
    <name evidence="1" type="primary">nuoN</name>
    <name type="ordered locus">YpAngola_A1804</name>
</gene>
<reference key="1">
    <citation type="journal article" date="2010" name="J. Bacteriol.">
        <title>Genome sequence of the deep-rooted Yersinia pestis strain Angola reveals new insights into the evolution and pangenome of the plague bacterium.</title>
        <authorList>
            <person name="Eppinger M."/>
            <person name="Worsham P.L."/>
            <person name="Nikolich M.P."/>
            <person name="Riley D.R."/>
            <person name="Sebastian Y."/>
            <person name="Mou S."/>
            <person name="Achtman M."/>
            <person name="Lindler L.E."/>
            <person name="Ravel J."/>
        </authorList>
    </citation>
    <scope>NUCLEOTIDE SEQUENCE [LARGE SCALE GENOMIC DNA]</scope>
    <source>
        <strain>Angola</strain>
    </source>
</reference>
<proteinExistence type="inferred from homology"/>
<evidence type="ECO:0000255" key="1">
    <source>
        <dbReference type="HAMAP-Rule" id="MF_00445"/>
    </source>
</evidence>
<comment type="function">
    <text evidence="1">NDH-1 shuttles electrons from NADH, via FMN and iron-sulfur (Fe-S) centers, to quinones in the respiratory chain. The immediate electron acceptor for the enzyme in this species is believed to be ubiquinone. Couples the redox reaction to proton translocation (for every two electrons transferred, four hydrogen ions are translocated across the cytoplasmic membrane), and thus conserves the redox energy in a proton gradient.</text>
</comment>
<comment type="catalytic activity">
    <reaction evidence="1">
        <text>a quinone + NADH + 5 H(+)(in) = a quinol + NAD(+) + 4 H(+)(out)</text>
        <dbReference type="Rhea" id="RHEA:57888"/>
        <dbReference type="ChEBI" id="CHEBI:15378"/>
        <dbReference type="ChEBI" id="CHEBI:24646"/>
        <dbReference type="ChEBI" id="CHEBI:57540"/>
        <dbReference type="ChEBI" id="CHEBI:57945"/>
        <dbReference type="ChEBI" id="CHEBI:132124"/>
    </reaction>
</comment>
<comment type="subunit">
    <text evidence="1">NDH-1 is composed of 13 different subunits. Subunits NuoA, H, J, K, L, M, N constitute the membrane sector of the complex.</text>
</comment>
<comment type="subcellular location">
    <subcellularLocation>
        <location evidence="1">Cell inner membrane</location>
        <topology evidence="1">Multi-pass membrane protein</topology>
    </subcellularLocation>
</comment>
<comment type="similarity">
    <text evidence="1">Belongs to the complex I subunit 2 family.</text>
</comment>